<organism>
    <name type="scientific">Medicago truncatula</name>
    <name type="common">Barrel medic</name>
    <name type="synonym">Medicago tribuloides</name>
    <dbReference type="NCBI Taxonomy" id="3880"/>
    <lineage>
        <taxon>Eukaryota</taxon>
        <taxon>Viridiplantae</taxon>
        <taxon>Streptophyta</taxon>
        <taxon>Embryophyta</taxon>
        <taxon>Tracheophyta</taxon>
        <taxon>Spermatophyta</taxon>
        <taxon>Magnoliopsida</taxon>
        <taxon>eudicotyledons</taxon>
        <taxon>Gunneridae</taxon>
        <taxon>Pentapetalae</taxon>
        <taxon>rosids</taxon>
        <taxon>fabids</taxon>
        <taxon>Fabales</taxon>
        <taxon>Fabaceae</taxon>
        <taxon>Papilionoideae</taxon>
        <taxon>50 kb inversion clade</taxon>
        <taxon>NPAAA clade</taxon>
        <taxon>Hologalegina</taxon>
        <taxon>IRL clade</taxon>
        <taxon>Trifolieae</taxon>
        <taxon>Medicago</taxon>
    </lineage>
</organism>
<feature type="chain" id="PRO_0000429363" description="Nodulin-13">
    <location>
        <begin position="1"/>
        <end position="163"/>
    </location>
</feature>
<feature type="binding site" evidence="1 8">
    <location>
        <position position="68"/>
    </location>
    <ligand>
        <name>kinetin</name>
        <dbReference type="ChEBI" id="CHEBI:27407"/>
    </ligand>
</feature>
<feature type="binding site" evidence="1 6">
    <location>
        <position position="68"/>
    </location>
    <ligand>
        <name>N(6)-dimethylallyladenine</name>
        <dbReference type="ChEBI" id="CHEBI:17660"/>
    </ligand>
</feature>
<feature type="binding site" evidence="1 7">
    <location>
        <position position="68"/>
    </location>
    <ligand>
        <name>trans-zeatin</name>
        <dbReference type="ChEBI" id="CHEBI:16522"/>
    </ligand>
</feature>
<feature type="binding site" evidence="1 8">
    <location>
        <position position="82"/>
    </location>
    <ligand>
        <name>kinetin</name>
        <dbReference type="ChEBI" id="CHEBI:27407"/>
    </ligand>
</feature>
<feature type="binding site" evidence="1 6">
    <location>
        <position position="82"/>
    </location>
    <ligand>
        <name>N(6)-dimethylallyladenine</name>
        <dbReference type="ChEBI" id="CHEBI:17660"/>
    </ligand>
</feature>
<feature type="binding site" evidence="1 7">
    <location>
        <position position="82"/>
    </location>
    <ligand>
        <name>trans-zeatin</name>
        <dbReference type="ChEBI" id="CHEBI:16522"/>
    </ligand>
</feature>
<feature type="binding site" evidence="1 7">
    <location>
        <position position="133"/>
    </location>
    <ligand>
        <name>trans-zeatin</name>
        <dbReference type="ChEBI" id="CHEBI:16522"/>
    </ligand>
</feature>
<feature type="strand" evidence="10">
    <location>
        <begin position="3"/>
        <end position="14"/>
    </location>
</feature>
<feature type="helix" evidence="10">
    <location>
        <begin position="16"/>
        <end position="24"/>
    </location>
</feature>
<feature type="helix" evidence="10">
    <location>
        <begin position="27"/>
        <end position="34"/>
    </location>
</feature>
<feature type="turn" evidence="10">
    <location>
        <begin position="36"/>
        <end position="38"/>
    </location>
</feature>
<feature type="strand" evidence="10">
    <location>
        <begin position="39"/>
        <end position="50"/>
    </location>
</feature>
<feature type="strand" evidence="10">
    <location>
        <begin position="54"/>
        <end position="63"/>
    </location>
</feature>
<feature type="strand" evidence="10">
    <location>
        <begin position="65"/>
        <end position="74"/>
    </location>
</feature>
<feature type="turn" evidence="10">
    <location>
        <begin position="75"/>
        <end position="78"/>
    </location>
</feature>
<feature type="strand" evidence="10">
    <location>
        <begin position="79"/>
        <end position="84"/>
    </location>
</feature>
<feature type="turn" evidence="11">
    <location>
        <begin position="88"/>
        <end position="92"/>
    </location>
</feature>
<feature type="strand" evidence="10">
    <location>
        <begin position="95"/>
        <end position="106"/>
    </location>
</feature>
<feature type="strand" evidence="10">
    <location>
        <begin position="112"/>
        <end position="122"/>
    </location>
</feature>
<feature type="strand" evidence="10">
    <location>
        <begin position="124"/>
        <end position="126"/>
    </location>
</feature>
<feature type="helix" evidence="10">
    <location>
        <begin position="131"/>
        <end position="154"/>
    </location>
</feature>
<name>NOD13_MEDTR</name>
<dbReference type="EMBL" id="BT145081">
    <property type="protein sequence ID" value="AFK44875.1"/>
    <property type="molecule type" value="mRNA"/>
</dbReference>
<dbReference type="EMBL" id="Y10455">
    <property type="protein sequence ID" value="CAA71481.1"/>
    <property type="molecule type" value="mRNA"/>
</dbReference>
<dbReference type="RefSeq" id="XP_013458290.1">
    <property type="nucleotide sequence ID" value="XM_013602836.1"/>
</dbReference>
<dbReference type="PDB" id="4GY9">
    <property type="method" value="X-ray"/>
    <property type="resolution" value="2.04 A"/>
    <property type="chains" value="A=1-163"/>
</dbReference>
<dbReference type="PDB" id="4JHG">
    <property type="method" value="X-ray"/>
    <property type="resolution" value="1.85 A"/>
    <property type="chains" value="A=1-163"/>
</dbReference>
<dbReference type="PDB" id="4JHH">
    <property type="method" value="X-ray"/>
    <property type="resolution" value="2.20 A"/>
    <property type="chains" value="A=1-163"/>
</dbReference>
<dbReference type="PDB" id="4JHI">
    <property type="method" value="X-ray"/>
    <property type="resolution" value="2.60 A"/>
    <property type="chains" value="A=1-163"/>
</dbReference>
<dbReference type="PDB" id="7QB6">
    <property type="method" value="X-ray"/>
    <property type="resolution" value="2.52 A"/>
    <property type="chains" value="A/B=1-163"/>
</dbReference>
<dbReference type="PDBsum" id="4GY9"/>
<dbReference type="PDBsum" id="4JHG"/>
<dbReference type="PDBsum" id="4JHH"/>
<dbReference type="PDBsum" id="4JHI"/>
<dbReference type="PDBsum" id="7QB6"/>
<dbReference type="SMR" id="P93330"/>
<dbReference type="EnsemblPlants" id="rna27133">
    <property type="protein sequence ID" value="RHN64328.1"/>
    <property type="gene ID" value="gene27133"/>
</dbReference>
<dbReference type="GeneID" id="25494100"/>
<dbReference type="Gramene" id="rna27133">
    <property type="protein sequence ID" value="RHN64328.1"/>
    <property type="gene ID" value="gene27133"/>
</dbReference>
<dbReference type="KEGG" id="mtr:25494100"/>
<dbReference type="HOGENOM" id="CLU_081988_2_0_1"/>
<dbReference type="OrthoDB" id="1858506at2759"/>
<dbReference type="EvolutionaryTrace" id="P93330"/>
<dbReference type="ExpressionAtlas" id="P93330">
    <property type="expression patterns" value="differential"/>
</dbReference>
<dbReference type="GO" id="GO:0010427">
    <property type="term" value="F:abscisic acid binding"/>
    <property type="evidence" value="ECO:0007669"/>
    <property type="project" value="InterPro"/>
</dbReference>
<dbReference type="GO" id="GO:0004864">
    <property type="term" value="F:protein phosphatase inhibitor activity"/>
    <property type="evidence" value="ECO:0007669"/>
    <property type="project" value="InterPro"/>
</dbReference>
<dbReference type="GO" id="GO:0038023">
    <property type="term" value="F:signaling receptor activity"/>
    <property type="evidence" value="ECO:0007669"/>
    <property type="project" value="InterPro"/>
</dbReference>
<dbReference type="GO" id="GO:0009738">
    <property type="term" value="P:abscisic acid-activated signaling pathway"/>
    <property type="evidence" value="ECO:0007669"/>
    <property type="project" value="InterPro"/>
</dbReference>
<dbReference type="GO" id="GO:0009736">
    <property type="term" value="P:cytokinin-activated signaling pathway"/>
    <property type="evidence" value="ECO:0007669"/>
    <property type="project" value="UniProtKB-KW"/>
</dbReference>
<dbReference type="GO" id="GO:0006952">
    <property type="term" value="P:defense response"/>
    <property type="evidence" value="ECO:0007669"/>
    <property type="project" value="UniProtKB-KW"/>
</dbReference>
<dbReference type="GO" id="GO:0009877">
    <property type="term" value="P:nodulation"/>
    <property type="evidence" value="ECO:0007669"/>
    <property type="project" value="UniProtKB-KW"/>
</dbReference>
<dbReference type="CDD" id="cd07816">
    <property type="entry name" value="Bet_v1-like"/>
    <property type="match status" value="1"/>
</dbReference>
<dbReference type="FunFam" id="3.30.530.20:FF:000007">
    <property type="entry name" value="Major pollen allergen Bet v 1-A"/>
    <property type="match status" value="1"/>
</dbReference>
<dbReference type="Gene3D" id="3.30.530.20">
    <property type="match status" value="1"/>
</dbReference>
<dbReference type="InterPro" id="IPR000916">
    <property type="entry name" value="Bet_v_I/MLP"/>
</dbReference>
<dbReference type="InterPro" id="IPR024949">
    <property type="entry name" value="Bet_v_I_allergen"/>
</dbReference>
<dbReference type="InterPro" id="IPR050279">
    <property type="entry name" value="Plant_def-hormone_signal"/>
</dbReference>
<dbReference type="InterPro" id="IPR023393">
    <property type="entry name" value="START-like_dom_sf"/>
</dbReference>
<dbReference type="PANTHER" id="PTHR31213:SF87">
    <property type="entry name" value="NODULIN-13"/>
    <property type="match status" value="1"/>
</dbReference>
<dbReference type="PANTHER" id="PTHR31213">
    <property type="entry name" value="OS08G0374000 PROTEIN-RELATED"/>
    <property type="match status" value="1"/>
</dbReference>
<dbReference type="Pfam" id="PF00407">
    <property type="entry name" value="Bet_v_1"/>
    <property type="match status" value="1"/>
</dbReference>
<dbReference type="PRINTS" id="PR00634">
    <property type="entry name" value="BETALLERGEN"/>
</dbReference>
<dbReference type="SUPFAM" id="SSF55961">
    <property type="entry name" value="Bet v1-like"/>
    <property type="match status" value="1"/>
</dbReference>
<evidence type="ECO:0000269" key="1">
    <source>
    </source>
</evidence>
<evidence type="ECO:0000269" key="2">
    <source>
    </source>
</evidence>
<evidence type="ECO:0000269" key="3">
    <source>
    </source>
</evidence>
<evidence type="ECO:0000305" key="4"/>
<evidence type="ECO:0000305" key="5">
    <source>
    </source>
</evidence>
<evidence type="ECO:0007744" key="6">
    <source>
        <dbReference type="PDB" id="4GY9"/>
    </source>
</evidence>
<evidence type="ECO:0007744" key="7">
    <source>
        <dbReference type="PDB" id="4JHG"/>
    </source>
</evidence>
<evidence type="ECO:0007744" key="8">
    <source>
        <dbReference type="PDB" id="4JHH"/>
    </source>
</evidence>
<evidence type="ECO:0007744" key="9">
    <source>
        <dbReference type="PDB" id="4JHI"/>
    </source>
</evidence>
<evidence type="ECO:0007829" key="10">
    <source>
        <dbReference type="PDB" id="4JHG"/>
    </source>
</evidence>
<evidence type="ECO:0007829" key="11">
    <source>
        <dbReference type="PDB" id="7QB6"/>
    </source>
</evidence>
<protein>
    <recommendedName>
        <fullName>Nodulin-13</fullName>
        <shortName>MtN13</shortName>
    </recommendedName>
    <alternativeName>
        <fullName>Pathogenesis-related PR10-like protein</fullName>
    </alternativeName>
</protein>
<gene>
    <name type="primary">N13</name>
</gene>
<keyword id="KW-0002">3D-structure</keyword>
<keyword id="KW-0932">Cytokinin signaling pathway</keyword>
<keyword id="KW-0536">Nodulation</keyword>
<keyword id="KW-0568">Pathogenesis-related protein</keyword>
<keyword id="KW-0611">Plant defense</keyword>
<proteinExistence type="evidence at protein level"/>
<reference key="1">
    <citation type="journal article" date="1996" name="Mol. Plant Microbe Interact.">
        <title>Use of a subtractive hybridization approach to identify new Medicago truncatula genes induced during root nodule development.</title>
        <authorList>
            <person name="Gamas P."/>
            <person name="de Carvalho Niebel F."/>
            <person name="Lescure N."/>
            <person name="Cullimore J."/>
        </authorList>
    </citation>
    <scope>NUCLEOTIDE SEQUENCE [MRNA]</scope>
    <scope>INDUCTION</scope>
    <source>
        <strain>cv. Jemalong J5</strain>
    </source>
</reference>
<reference key="2">
    <citation type="journal article" date="1998" name="Mol. Plant Microbe Interact.">
        <title>Symbiosis-specific expression of two Medicago truncatula nodulin genes, MtN1 and MtN13, encoding products homologous to plant defense proteins.</title>
        <authorList>
            <person name="Gamas P."/>
            <person name="de Billy F."/>
            <person name="Truchet G."/>
        </authorList>
    </citation>
    <scope>NUCLEOTIDE SEQUENCE [MRNA]</scope>
    <scope>TISSUE SPECIFICITY</scope>
    <source>
        <strain>cv. Jemalong J5</strain>
    </source>
</reference>
<reference key="3">
    <citation type="submission" date="2012-05" db="EMBL/GenBank/DDBJ databases">
        <authorList>
            <person name="Krishnakumar V."/>
            <person name="Cheung F."/>
            <person name="Xiao Y."/>
            <person name="Chan A."/>
            <person name="Moskal W.A."/>
            <person name="Town C.D."/>
        </authorList>
    </citation>
    <scope>NUCLEOTIDE SEQUENCE [LARGE SCALE MRNA]</scope>
</reference>
<reference evidence="6 7 8 9" key="4">
    <citation type="journal article" date="2013" name="Acta Crystallogr. D">
        <title>The landscape of cytokinin binding by a plant nodulin.</title>
        <authorList>
            <person name="Ruszkowski M."/>
            <person name="Szpotkowski K."/>
            <person name="Sikorski M."/>
            <person name="Jaskolski M."/>
        </authorList>
    </citation>
    <scope>X-RAY CRYSTALLOGRAPHY (1.85 ANGSTROMS) IN COMPLEXES WITH THE CYTOKININS TRANS-ZEATIN; N(6)-DIMETHYLALLYLADENINE AND KINETIN</scope>
    <scope>SUBUNIT</scope>
    <source>
        <strain>cv. Jemalong J5</strain>
    </source>
</reference>
<accession>P93330</accession>
<comment type="function">
    <text>May be involved in nodule organogenesis rather in the processes related to nitrogen fixation or interactions with the bacteria. May regulate nodulation by controlling the levels of freely available cytokinins.</text>
</comment>
<comment type="subunit">
    <text evidence="1">Homodimer.</text>
</comment>
<comment type="tissue specificity">
    <text evidence="3">Expressed in nodules, but not in leaves, stems, flowers and roots. Specifically located in the nodule cortex.</text>
</comment>
<comment type="induction">
    <text evidence="2">Up-regulated during nodulation, but not by Nod factors or pathogen infection.</text>
</comment>
<comment type="miscellaneous">
    <text evidence="5">The NT13 molecules that have dimerized without cytokinin ligand most probably lose their binding properties because it seems unlikely that the dimer can dissociate back to the monomer. Asp-62 from the complementary protein molecule forms hydrogen bonds with the cytokinin scaffold.</text>
</comment>
<comment type="similarity">
    <text evidence="4">Belongs to the BetVI family.</text>
</comment>
<sequence length="163" mass="18180">MGVITSESEYVSSLSAEKLYRGIVEDGNIIYPKALPRFIEKAETLEGDGGPGTIKKLTFVGDFGSTKQHIDMVDRENCAYTYSVYEGIALSDQPLEKIVFEFKLVPTPEEGCIVKSTTKYYTKGDDIELSKDYLEAGIERFEGFTKAVESFLLANPDYNKDSN</sequence>